<dbReference type="EC" id="1.2.4.4" evidence="1"/>
<dbReference type="EMBL" id="AF145452">
    <property type="protein sequence ID" value="AAF35281.1"/>
    <property type="molecule type" value="mRNA"/>
</dbReference>
<dbReference type="EMBL" id="AP000603">
    <property type="protein sequence ID" value="BAB01752.1"/>
    <property type="molecule type" value="Genomic_DNA"/>
</dbReference>
<dbReference type="EMBL" id="CP002686">
    <property type="protein sequence ID" value="AEE75357.1"/>
    <property type="molecule type" value="Genomic_DNA"/>
</dbReference>
<dbReference type="EMBL" id="BT024889">
    <property type="protein sequence ID" value="ABD85160.1"/>
    <property type="molecule type" value="mRNA"/>
</dbReference>
<dbReference type="EMBL" id="AK229269">
    <property type="protein sequence ID" value="BAF01133.1"/>
    <property type="molecule type" value="mRNA"/>
</dbReference>
<dbReference type="RefSeq" id="NP_187954.1">
    <property type="nucleotide sequence ID" value="NM_112191.3"/>
</dbReference>
<dbReference type="SMR" id="Q9LDY2"/>
<dbReference type="FunCoup" id="Q9LDY2">
    <property type="interactions" value="1633"/>
</dbReference>
<dbReference type="STRING" id="3702.Q9LDY2"/>
<dbReference type="PaxDb" id="3702-AT3G13450.1"/>
<dbReference type="ProteomicsDB" id="238998"/>
<dbReference type="EnsemblPlants" id="AT3G13450.1">
    <property type="protein sequence ID" value="AT3G13450.1"/>
    <property type="gene ID" value="AT3G13450"/>
</dbReference>
<dbReference type="GeneID" id="820547"/>
<dbReference type="Gramene" id="AT3G13450.1">
    <property type="protein sequence ID" value="AT3G13450.1"/>
    <property type="gene ID" value="AT3G13450"/>
</dbReference>
<dbReference type="KEGG" id="ath:AT3G13450"/>
<dbReference type="Araport" id="AT3G13450"/>
<dbReference type="TAIR" id="AT3G13450">
    <property type="gene designation" value="DIN4"/>
</dbReference>
<dbReference type="eggNOG" id="KOG0525">
    <property type="taxonomic scope" value="Eukaryota"/>
</dbReference>
<dbReference type="HOGENOM" id="CLU_012907_1_0_1"/>
<dbReference type="InParanoid" id="Q9LDY2"/>
<dbReference type="OMA" id="PCLFVET"/>
<dbReference type="PhylomeDB" id="Q9LDY2"/>
<dbReference type="BioCyc" id="ARA:AT3G13450-MONOMER"/>
<dbReference type="BioCyc" id="MetaCyc:AT3G13450-MONOMER"/>
<dbReference type="PRO" id="PR:Q9LDY2"/>
<dbReference type="Proteomes" id="UP000006548">
    <property type="component" value="Chromosome 3"/>
</dbReference>
<dbReference type="ExpressionAtlas" id="Q9LDY2">
    <property type="expression patterns" value="baseline and differential"/>
</dbReference>
<dbReference type="GO" id="GO:0005759">
    <property type="term" value="C:mitochondrial matrix"/>
    <property type="evidence" value="ECO:0007669"/>
    <property type="project" value="UniProtKB-SubCell"/>
</dbReference>
<dbReference type="GO" id="GO:0003863">
    <property type="term" value="F:3-methyl-2-oxobutanoate dehydrogenase (2-methylpropanoyl-transferring) activity"/>
    <property type="evidence" value="ECO:0007669"/>
    <property type="project" value="UniProtKB-EC"/>
</dbReference>
<dbReference type="GO" id="GO:0046872">
    <property type="term" value="F:metal ion binding"/>
    <property type="evidence" value="ECO:0007669"/>
    <property type="project" value="UniProtKB-KW"/>
</dbReference>
<dbReference type="GO" id="GO:0009083">
    <property type="term" value="P:branched-chain amino acid catabolic process"/>
    <property type="evidence" value="ECO:0000316"/>
    <property type="project" value="TAIR"/>
</dbReference>
<dbReference type="GO" id="GO:0043617">
    <property type="term" value="P:cellular response to sucrose starvation"/>
    <property type="evidence" value="ECO:0000270"/>
    <property type="project" value="UniProtKB"/>
</dbReference>
<dbReference type="GO" id="GO:0009646">
    <property type="term" value="P:response to absence of light"/>
    <property type="evidence" value="ECO:0000270"/>
    <property type="project" value="UniProtKB"/>
</dbReference>
<dbReference type="GO" id="GO:0009744">
    <property type="term" value="P:response to sucrose"/>
    <property type="evidence" value="ECO:0000270"/>
    <property type="project" value="UniProtKB"/>
</dbReference>
<dbReference type="CDD" id="cd07036">
    <property type="entry name" value="TPP_PYR_E1-PDHc-beta_like"/>
    <property type="match status" value="1"/>
</dbReference>
<dbReference type="FunFam" id="3.40.50.920:FF:000004">
    <property type="entry name" value="2-oxoisovalerate dehydrogenase subunit beta 1, mitochondrial"/>
    <property type="match status" value="1"/>
</dbReference>
<dbReference type="FunFam" id="3.40.50.970:FF:000001">
    <property type="entry name" value="Pyruvate dehydrogenase E1 beta subunit"/>
    <property type="match status" value="1"/>
</dbReference>
<dbReference type="Gene3D" id="3.40.50.920">
    <property type="match status" value="1"/>
</dbReference>
<dbReference type="Gene3D" id="3.40.50.970">
    <property type="match status" value="1"/>
</dbReference>
<dbReference type="InterPro" id="IPR029061">
    <property type="entry name" value="THDP-binding"/>
</dbReference>
<dbReference type="InterPro" id="IPR009014">
    <property type="entry name" value="Transketo_C/PFOR_II"/>
</dbReference>
<dbReference type="InterPro" id="IPR005475">
    <property type="entry name" value="Transketolase-like_Pyr-bd"/>
</dbReference>
<dbReference type="InterPro" id="IPR033248">
    <property type="entry name" value="Transketolase_C"/>
</dbReference>
<dbReference type="PANTHER" id="PTHR42980:SF1">
    <property type="entry name" value="2-OXOISOVALERATE DEHYDROGENASE SUBUNIT BETA, MITOCHONDRIAL"/>
    <property type="match status" value="1"/>
</dbReference>
<dbReference type="PANTHER" id="PTHR42980">
    <property type="entry name" value="2-OXOISOVALERATE DEHYDROGENASE SUBUNIT BETA-RELATED"/>
    <property type="match status" value="1"/>
</dbReference>
<dbReference type="Pfam" id="PF02779">
    <property type="entry name" value="Transket_pyr"/>
    <property type="match status" value="1"/>
</dbReference>
<dbReference type="Pfam" id="PF02780">
    <property type="entry name" value="Transketolase_C"/>
    <property type="match status" value="1"/>
</dbReference>
<dbReference type="SMART" id="SM00861">
    <property type="entry name" value="Transket_pyr"/>
    <property type="match status" value="1"/>
</dbReference>
<dbReference type="SUPFAM" id="SSF52518">
    <property type="entry name" value="Thiamin diphosphate-binding fold (THDP-binding)"/>
    <property type="match status" value="1"/>
</dbReference>
<dbReference type="SUPFAM" id="SSF52922">
    <property type="entry name" value="TK C-terminal domain-like"/>
    <property type="match status" value="1"/>
</dbReference>
<evidence type="ECO:0000250" key="1">
    <source>
        <dbReference type="UniProtKB" id="P21953"/>
    </source>
</evidence>
<evidence type="ECO:0000255" key="2"/>
<evidence type="ECO:0000269" key="3">
    <source>
    </source>
</evidence>
<evidence type="ECO:0000269" key="4">
    <source>
    </source>
</evidence>
<evidence type="ECO:0000269" key="5">
    <source>
    </source>
</evidence>
<evidence type="ECO:0000269" key="6">
    <source>
    </source>
</evidence>
<accession>Q9LDY2</accession>
<proteinExistence type="evidence at protein level"/>
<feature type="transit peptide" description="Mitochondrion" evidence="2">
    <location>
        <begin position="1"/>
        <end position="16"/>
    </location>
</feature>
<feature type="chain" id="PRO_0000422385" description="2-oxoisovalerate dehydrogenase subunit beta 2, mitochondrial">
    <location>
        <begin position="17"/>
        <end position="358"/>
    </location>
</feature>
<feature type="binding site" evidence="1">
    <location>
        <position position="119"/>
    </location>
    <ligand>
        <name>thiamine diphosphate</name>
        <dbReference type="ChEBI" id="CHEBI:58937"/>
        <note>ligand shared with alpha subunit</note>
    </ligand>
</feature>
<feature type="binding site" evidence="1">
    <location>
        <position position="145"/>
    </location>
    <ligand>
        <name>K(+)</name>
        <dbReference type="ChEBI" id="CHEBI:29103"/>
        <note>structural</note>
    </ligand>
</feature>
<feature type="binding site" evidence="1">
    <location>
        <position position="147"/>
    </location>
    <ligand>
        <name>K(+)</name>
        <dbReference type="ChEBI" id="CHEBI:29103"/>
        <note>structural</note>
    </ligand>
</feature>
<feature type="binding site" evidence="1">
    <location>
        <position position="148"/>
    </location>
    <ligand>
        <name>K(+)</name>
        <dbReference type="ChEBI" id="CHEBI:29103"/>
        <note>structural</note>
    </ligand>
</feature>
<feature type="binding site" evidence="1">
    <location>
        <position position="198"/>
    </location>
    <ligand>
        <name>K(+)</name>
        <dbReference type="ChEBI" id="CHEBI:29103"/>
        <note>structural</note>
    </ligand>
</feature>
<feature type="binding site" evidence="1">
    <location>
        <position position="200"/>
    </location>
    <ligand>
        <name>K(+)</name>
        <dbReference type="ChEBI" id="CHEBI:29103"/>
        <note>structural</note>
    </ligand>
</feature>
<protein>
    <recommendedName>
        <fullName>2-oxoisovalerate dehydrogenase subunit beta 2, mitochondrial</fullName>
        <ecNumber evidence="1">1.2.4.4</ecNumber>
    </recommendedName>
    <alternativeName>
        <fullName>Branched-chain alpha-keto acid dehydrogenase E1 component beta chain</fullName>
        <shortName>BCKDE1B</shortName>
        <shortName>BCKDH E1-beta</shortName>
    </alternativeName>
    <alternativeName>
        <fullName>Protein DARK INDUCIBLE 4</fullName>
    </alternativeName>
</protein>
<sequence length="358" mass="39419">MAAALVRRFCRGSSFPVSGHGYRMLSTVENVSESGKSMNLYSAINQALHIALETDPRSYVFGEDVGFGGVFRCTTGLAERFGKSRVFNTPLCEQGIVGFGIGLAAMGNRVIAEIQFADYIFPAFDQIVNEAAKFRYRSGNQFNCGGLTIRAPYGAVGHGGHYHSQSPEAFFCHVPGIKVVIPRSPREAKGLLLSSIRDPNPVVFFEPKWLYRQAVEDVPEDDYMIPLSEAEVMREGSDITLVGWGAQLTIMEQACLDAENEGISCELIDLKTLIPWDKEIVETSVRKTGRLLISHEAPVTGGFGAEIAATIVERCFLRLEAPVSRVCGLDTPFPLVFEPFYMPTKNKILDAIRSTVNY</sequence>
<comment type="function">
    <text evidence="1 4 6">The branched-chain alpha-keto dehydrogenase complex catalyzes the overall conversion of alpha-keto acids to acyl-CoA and CO(2). It contains multiple copies of three enzymatic components: branched-chain alpha-keto acid decarboxylase (E1), lipoamide acyltransferase (E2) and lipoamide dehydrogenase (E3) (By similarity). Required during sugar starvation and acts under the control of a sugar-sensing mechanism involving Ser/Thr kinases and phosphatases (PubMed:11080291, PubMed:11917081).</text>
</comment>
<comment type="catalytic activity">
    <reaction evidence="1">
        <text>N(6)-[(R)-lipoyl]-L-lysyl-[protein] + 3-methyl-2-oxobutanoate + H(+) = N(6)-[(R)-S(8)-2-methylpropanoyldihydrolipoyl]-L-lysyl-[protein] + CO2</text>
        <dbReference type="Rhea" id="RHEA:13457"/>
        <dbReference type="Rhea" id="RHEA-COMP:10474"/>
        <dbReference type="Rhea" id="RHEA-COMP:10497"/>
        <dbReference type="ChEBI" id="CHEBI:11851"/>
        <dbReference type="ChEBI" id="CHEBI:15378"/>
        <dbReference type="ChEBI" id="CHEBI:16526"/>
        <dbReference type="ChEBI" id="CHEBI:83099"/>
        <dbReference type="ChEBI" id="CHEBI:83142"/>
        <dbReference type="EC" id="1.2.4.4"/>
    </reaction>
    <physiologicalReaction direction="left-to-right" evidence="1">
        <dbReference type="Rhea" id="RHEA:13458"/>
    </physiologicalReaction>
</comment>
<comment type="cofactor">
    <cofactor evidence="1">
        <name>thiamine diphosphate</name>
        <dbReference type="ChEBI" id="CHEBI:58937"/>
    </cofactor>
</comment>
<comment type="subunit">
    <text evidence="1">Heterotetramer of alpha and beta chains.</text>
</comment>
<comment type="subcellular location">
    <subcellularLocation>
        <location evidence="1">Mitochondrion matrix</location>
    </subcellularLocation>
</comment>
<comment type="tissue specificity">
    <text evidence="3">Expressed in the non-photosynthetic organs such as siliques, flowers and roots.</text>
</comment>
<comment type="developmental stage">
    <text evidence="3">Barely detected in non senescent green leaves, accumulated slightly at the early stage of leaf senescence and strongly expressed at the late stage of leaf senescence.</text>
</comment>
<comment type="induction">
    <text evidence="3 4 5 6">By dark treatment. Down-regulated by sucrose in a hexokinase dependent manner. Up-regulated by Leucine and its derivative alpha-keto acid (KIC).</text>
</comment>
<organism>
    <name type="scientific">Arabidopsis thaliana</name>
    <name type="common">Mouse-ear cress</name>
    <dbReference type="NCBI Taxonomy" id="3702"/>
    <lineage>
        <taxon>Eukaryota</taxon>
        <taxon>Viridiplantae</taxon>
        <taxon>Streptophyta</taxon>
        <taxon>Embryophyta</taxon>
        <taxon>Tracheophyta</taxon>
        <taxon>Spermatophyta</taxon>
        <taxon>Magnoliopsida</taxon>
        <taxon>eudicotyledons</taxon>
        <taxon>Gunneridae</taxon>
        <taxon>Pentapetalae</taxon>
        <taxon>rosids</taxon>
        <taxon>malvids</taxon>
        <taxon>Brassicales</taxon>
        <taxon>Brassicaceae</taxon>
        <taxon>Camelineae</taxon>
        <taxon>Arabidopsis</taxon>
    </lineage>
</organism>
<gene>
    <name type="primary">DIN4</name>
    <name type="ordered locus">At3g13450</name>
    <name type="ORF">MRP15.11</name>
</gene>
<reference key="1">
    <citation type="journal article" date="2000" name="J. Biol. Chem.">
        <title>Isolation and characterization of cDNA clones for the E1beta and E2 subunits of the branched-chain alpha-ketoacid dehydrogenase complex in Arabidopsis.</title>
        <authorList>
            <person name="Fujiki Y."/>
            <person name="Sato T."/>
            <person name="Ito M."/>
            <person name="Watanabe A."/>
        </authorList>
    </citation>
    <scope>NUCLEOTIDE SEQUENCE [MRNA]</scope>
    <scope>INDUCTION BY DARK AND SUCROSE</scope>
    <scope>TISSUE SPECIFICITY</scope>
    <scope>DEVELOPMENTAL STAGE</scope>
    <source>
        <strain>cv. Columbia</strain>
    </source>
</reference>
<reference key="2">
    <citation type="journal article" date="2000" name="DNA Res.">
        <title>Structural analysis of Arabidopsis thaliana chromosome 3. II. Sequence features of the 4,251,695 bp regions covered by 90 P1, TAC and BAC clones.</title>
        <authorList>
            <person name="Kaneko T."/>
            <person name="Katoh T."/>
            <person name="Sato S."/>
            <person name="Nakamura Y."/>
            <person name="Asamizu E."/>
            <person name="Tabata S."/>
        </authorList>
    </citation>
    <scope>NUCLEOTIDE SEQUENCE [LARGE SCALE GENOMIC DNA]</scope>
    <source>
        <strain>cv. Columbia</strain>
    </source>
</reference>
<reference key="3">
    <citation type="journal article" date="2017" name="Plant J.">
        <title>Araport11: a complete reannotation of the Arabidopsis thaliana reference genome.</title>
        <authorList>
            <person name="Cheng C.Y."/>
            <person name="Krishnakumar V."/>
            <person name="Chan A.P."/>
            <person name="Thibaud-Nissen F."/>
            <person name="Schobel S."/>
            <person name="Town C.D."/>
        </authorList>
    </citation>
    <scope>GENOME REANNOTATION</scope>
    <source>
        <strain>cv. Columbia</strain>
    </source>
</reference>
<reference key="4">
    <citation type="submission" date="2006-03" db="EMBL/GenBank/DDBJ databases">
        <title>Arabidopsis ORF clones.</title>
        <authorList>
            <person name="Shinn P."/>
            <person name="Chen H."/>
            <person name="Kim C.J."/>
            <person name="Ecker J.R."/>
        </authorList>
    </citation>
    <scope>NUCLEOTIDE SEQUENCE [LARGE SCALE MRNA]</scope>
    <source>
        <strain>cv. Columbia</strain>
    </source>
</reference>
<reference key="5">
    <citation type="submission" date="2006-07" db="EMBL/GenBank/DDBJ databases">
        <title>Large-scale analysis of RIKEN Arabidopsis full-length (RAFL) cDNAs.</title>
        <authorList>
            <person name="Totoki Y."/>
            <person name="Seki M."/>
            <person name="Ishida J."/>
            <person name="Nakajima M."/>
            <person name="Enju A."/>
            <person name="Kamiya A."/>
            <person name="Narusaka M."/>
            <person name="Shin-i T."/>
            <person name="Nakagawa M."/>
            <person name="Sakamoto N."/>
            <person name="Oishi K."/>
            <person name="Kohara Y."/>
            <person name="Kobayashi M."/>
            <person name="Toyoda A."/>
            <person name="Sakaki Y."/>
            <person name="Sakurai T."/>
            <person name="Iida K."/>
            <person name="Akiyama K."/>
            <person name="Satou M."/>
            <person name="Toyoda T."/>
            <person name="Konagaya A."/>
            <person name="Carninci P."/>
            <person name="Kawai J."/>
            <person name="Hayashizaki Y."/>
            <person name="Shinozaki K."/>
        </authorList>
    </citation>
    <scope>NUCLEOTIDE SEQUENCE [LARGE SCALE MRNA]</scope>
    <source>
        <strain>cv. Columbia</strain>
    </source>
</reference>
<reference key="6">
    <citation type="journal article" date="2000" name="Plant Physiol.">
        <title>Multiple signaling pathways in gene expression during sugar starvation. Pharmacological analysis of din gene expression in suspension-cultured cells of Arabidopsis.</title>
        <authorList>
            <person name="Fujiki Y."/>
            <person name="Ito M."/>
            <person name="Nishida I."/>
            <person name="Watanabe A."/>
        </authorList>
    </citation>
    <scope>INDUCTION BY SUGAR</scope>
    <scope>FUNCTION</scope>
</reference>
<reference key="7">
    <citation type="journal article" date="2001" name="FEBS Lett.">
        <title>Leucine and its keto acid enhance the coordinated expression of genes for branched-chain amino acid catabolism in Arabidopsis under sugar starvation.</title>
        <authorList>
            <person name="Fujiki Y."/>
            <person name="Ito M."/>
            <person name="Nishida I."/>
            <person name="Watanabe A."/>
        </authorList>
    </citation>
    <scope>INDUCTION BY LEUCINE AND KIC</scope>
</reference>
<reference key="8">
    <citation type="journal article" date="2002" name="Plant Cell Physiol.">
        <title>Activation of the promoters of Arabidopsis genes for the branched-chain alpha-keto acid dehydrogenase complex in transgenic tobacco BY-2 cells under sugar starvation.</title>
        <authorList>
            <person name="Fujiki Y."/>
            <person name="Ito M."/>
            <person name="Itoh T."/>
            <person name="Nishida I."/>
            <person name="Watanabe A."/>
        </authorList>
    </citation>
    <scope>FUNCTION</scope>
    <scope>INDUCTION BY SUGAR</scope>
</reference>
<reference key="9">
    <citation type="journal article" date="2004" name="Plant Physiol.">
        <title>Lipoic acid-dependent oxidative catabolism of alpha-keto acids in mitochondria provides evidence for branched-chain amino acid catabolism in Arabidopsis.</title>
        <authorList>
            <person name="Taylor N.L."/>
            <person name="Heazlewood J.L."/>
            <person name="Day D.A."/>
            <person name="Millar A.H."/>
        </authorList>
    </citation>
    <scope>IDENTIFICATION BY MASS SPECTROMETRY</scope>
    <scope>SUBCELLULAR LOCATION</scope>
</reference>
<keyword id="KW-0479">Metal-binding</keyword>
<keyword id="KW-0496">Mitochondrion</keyword>
<keyword id="KW-0560">Oxidoreductase</keyword>
<keyword id="KW-0630">Potassium</keyword>
<keyword id="KW-1185">Reference proteome</keyword>
<keyword id="KW-0809">Transit peptide</keyword>
<name>ODBB2_ARATH</name>